<reference key="1">
    <citation type="journal article" date="2010" name="Genome Biol. Evol.">
        <title>Continuing evolution of Burkholderia mallei through genome reduction and large-scale rearrangements.</title>
        <authorList>
            <person name="Losada L."/>
            <person name="Ronning C.M."/>
            <person name="DeShazer D."/>
            <person name="Woods D."/>
            <person name="Fedorova N."/>
            <person name="Kim H.S."/>
            <person name="Shabalina S.A."/>
            <person name="Pearson T.R."/>
            <person name="Brinkac L."/>
            <person name="Tan P."/>
            <person name="Nandi T."/>
            <person name="Crabtree J."/>
            <person name="Badger J."/>
            <person name="Beckstrom-Sternberg S."/>
            <person name="Saqib M."/>
            <person name="Schutzer S.E."/>
            <person name="Keim P."/>
            <person name="Nierman W.C."/>
        </authorList>
    </citation>
    <scope>NUCLEOTIDE SEQUENCE [LARGE SCALE GENOMIC DNA]</scope>
    <source>
        <strain>1710b</strain>
    </source>
</reference>
<sequence length="161" mass="18036">MPSFDVVSEANMIEVKNAVEQSNKEISTRFDFKGSDARVEQKERELTLYADDDFKLGQVKDVLIGKMAKRNVDVRFLDYGKIEKIGGDKVKQVVTIKKGVSGDLAKKVVRIVKDSKIKVQASIQGDAVRVSGAKRDDLQSTIALLRKEVTDTPLDFNNFRD</sequence>
<feature type="chain" id="PRO_0000261924" description="Nucleotide-binding protein BURPS1710b_1071">
    <location>
        <begin position="1"/>
        <end position="161"/>
    </location>
</feature>
<evidence type="ECO:0000255" key="1">
    <source>
        <dbReference type="HAMAP-Rule" id="MF_00632"/>
    </source>
</evidence>
<accession>Q3JVC0</accession>
<name>Y1071_BURP1</name>
<keyword id="KW-0547">Nucleotide-binding</keyword>
<comment type="function">
    <text evidence="1">Nucleotide-binding protein.</text>
</comment>
<comment type="similarity">
    <text evidence="1">Belongs to the YajQ family.</text>
</comment>
<gene>
    <name type="ordered locus">BURPS1710b_1071</name>
</gene>
<proteinExistence type="inferred from homology"/>
<dbReference type="EMBL" id="CP000124">
    <property type="protein sequence ID" value="ABA50991.1"/>
    <property type="molecule type" value="Genomic_DNA"/>
</dbReference>
<dbReference type="RefSeq" id="WP_004189237.1">
    <property type="nucleotide sequence ID" value="NC_007434.1"/>
</dbReference>
<dbReference type="SMR" id="Q3JVC0"/>
<dbReference type="EnsemblBacteria" id="ABA50991">
    <property type="protein sequence ID" value="ABA50991"/>
    <property type="gene ID" value="BURPS1710b_1071"/>
</dbReference>
<dbReference type="KEGG" id="bpm:BURPS1710b_1071"/>
<dbReference type="HOGENOM" id="CLU_099839_1_0_4"/>
<dbReference type="Proteomes" id="UP000002700">
    <property type="component" value="Chromosome I"/>
</dbReference>
<dbReference type="GO" id="GO:0005829">
    <property type="term" value="C:cytosol"/>
    <property type="evidence" value="ECO:0007669"/>
    <property type="project" value="TreeGrafter"/>
</dbReference>
<dbReference type="GO" id="GO:0000166">
    <property type="term" value="F:nucleotide binding"/>
    <property type="evidence" value="ECO:0007669"/>
    <property type="project" value="TreeGrafter"/>
</dbReference>
<dbReference type="CDD" id="cd11740">
    <property type="entry name" value="YajQ_like"/>
    <property type="match status" value="1"/>
</dbReference>
<dbReference type="Gene3D" id="3.30.70.860">
    <property type="match status" value="1"/>
</dbReference>
<dbReference type="Gene3D" id="3.30.70.990">
    <property type="entry name" value="YajQ-like, domain 2"/>
    <property type="match status" value="1"/>
</dbReference>
<dbReference type="HAMAP" id="MF_00632">
    <property type="entry name" value="YajQ"/>
    <property type="match status" value="1"/>
</dbReference>
<dbReference type="InterPro" id="IPR007551">
    <property type="entry name" value="DUF520"/>
</dbReference>
<dbReference type="InterPro" id="IPR035571">
    <property type="entry name" value="UPF0234-like_C"/>
</dbReference>
<dbReference type="InterPro" id="IPR035570">
    <property type="entry name" value="UPF0234_N"/>
</dbReference>
<dbReference type="InterPro" id="IPR036183">
    <property type="entry name" value="YajQ-like_sf"/>
</dbReference>
<dbReference type="NCBIfam" id="NF003819">
    <property type="entry name" value="PRK05412.1"/>
    <property type="match status" value="1"/>
</dbReference>
<dbReference type="PANTHER" id="PTHR30476">
    <property type="entry name" value="UPF0234 PROTEIN YAJQ"/>
    <property type="match status" value="1"/>
</dbReference>
<dbReference type="PANTHER" id="PTHR30476:SF0">
    <property type="entry name" value="UPF0234 PROTEIN YAJQ"/>
    <property type="match status" value="1"/>
</dbReference>
<dbReference type="Pfam" id="PF04461">
    <property type="entry name" value="DUF520"/>
    <property type="match status" value="1"/>
</dbReference>
<dbReference type="SUPFAM" id="SSF89963">
    <property type="entry name" value="YajQ-like"/>
    <property type="match status" value="2"/>
</dbReference>
<organism>
    <name type="scientific">Burkholderia pseudomallei (strain 1710b)</name>
    <dbReference type="NCBI Taxonomy" id="320372"/>
    <lineage>
        <taxon>Bacteria</taxon>
        <taxon>Pseudomonadati</taxon>
        <taxon>Pseudomonadota</taxon>
        <taxon>Betaproteobacteria</taxon>
        <taxon>Burkholderiales</taxon>
        <taxon>Burkholderiaceae</taxon>
        <taxon>Burkholderia</taxon>
        <taxon>pseudomallei group</taxon>
    </lineage>
</organism>
<protein>
    <recommendedName>
        <fullName evidence="1">Nucleotide-binding protein BURPS1710b_1071</fullName>
    </recommendedName>
</protein>